<dbReference type="EC" id="4.1.1.49" evidence="1"/>
<dbReference type="EMBL" id="AE016827">
    <property type="protein sequence ID" value="AAU38900.1"/>
    <property type="molecule type" value="Genomic_DNA"/>
</dbReference>
<dbReference type="RefSeq" id="WP_011201442.1">
    <property type="nucleotide sequence ID" value="NC_006300.1"/>
</dbReference>
<dbReference type="SMR" id="Q65Q60"/>
<dbReference type="STRING" id="221988.MS2293"/>
<dbReference type="KEGG" id="msu:MS2293"/>
<dbReference type="eggNOG" id="COG1866">
    <property type="taxonomic scope" value="Bacteria"/>
</dbReference>
<dbReference type="HOGENOM" id="CLU_018247_0_1_6"/>
<dbReference type="OrthoDB" id="9806325at2"/>
<dbReference type="UniPathway" id="UPA00138"/>
<dbReference type="Proteomes" id="UP000000607">
    <property type="component" value="Chromosome"/>
</dbReference>
<dbReference type="GO" id="GO:0005829">
    <property type="term" value="C:cytosol"/>
    <property type="evidence" value="ECO:0007669"/>
    <property type="project" value="TreeGrafter"/>
</dbReference>
<dbReference type="GO" id="GO:0005524">
    <property type="term" value="F:ATP binding"/>
    <property type="evidence" value="ECO:0007669"/>
    <property type="project" value="UniProtKB-UniRule"/>
</dbReference>
<dbReference type="GO" id="GO:0046872">
    <property type="term" value="F:metal ion binding"/>
    <property type="evidence" value="ECO:0007669"/>
    <property type="project" value="UniProtKB-KW"/>
</dbReference>
<dbReference type="GO" id="GO:0004612">
    <property type="term" value="F:phosphoenolpyruvate carboxykinase (ATP) activity"/>
    <property type="evidence" value="ECO:0007669"/>
    <property type="project" value="UniProtKB-UniRule"/>
</dbReference>
<dbReference type="GO" id="GO:0006094">
    <property type="term" value="P:gluconeogenesis"/>
    <property type="evidence" value="ECO:0007669"/>
    <property type="project" value="UniProtKB-UniRule"/>
</dbReference>
<dbReference type="CDD" id="cd00484">
    <property type="entry name" value="PEPCK_ATP"/>
    <property type="match status" value="1"/>
</dbReference>
<dbReference type="FunFam" id="2.170.8.10:FF:000001">
    <property type="entry name" value="Phosphoenolpyruvate carboxykinase (ATP)"/>
    <property type="match status" value="1"/>
</dbReference>
<dbReference type="FunFam" id="3.40.449.10:FF:000001">
    <property type="entry name" value="Phosphoenolpyruvate carboxykinase (ATP)"/>
    <property type="match status" value="1"/>
</dbReference>
<dbReference type="Gene3D" id="3.90.228.20">
    <property type="match status" value="1"/>
</dbReference>
<dbReference type="Gene3D" id="3.40.449.10">
    <property type="entry name" value="Phosphoenolpyruvate Carboxykinase, domain 1"/>
    <property type="match status" value="1"/>
</dbReference>
<dbReference type="Gene3D" id="2.170.8.10">
    <property type="entry name" value="Phosphoenolpyruvate Carboxykinase, domain 2"/>
    <property type="match status" value="1"/>
</dbReference>
<dbReference type="HAMAP" id="MF_00453">
    <property type="entry name" value="PEPCK_ATP"/>
    <property type="match status" value="1"/>
</dbReference>
<dbReference type="InterPro" id="IPR001272">
    <property type="entry name" value="PEP_carboxykinase_ATP"/>
</dbReference>
<dbReference type="InterPro" id="IPR013035">
    <property type="entry name" value="PEP_carboxykinase_C"/>
</dbReference>
<dbReference type="InterPro" id="IPR008210">
    <property type="entry name" value="PEP_carboxykinase_N"/>
</dbReference>
<dbReference type="InterPro" id="IPR015994">
    <property type="entry name" value="PEPCK_ATP_CS"/>
</dbReference>
<dbReference type="NCBIfam" id="TIGR00224">
    <property type="entry name" value="pckA"/>
    <property type="match status" value="1"/>
</dbReference>
<dbReference type="NCBIfam" id="NF006819">
    <property type="entry name" value="PRK09344.1-1"/>
    <property type="match status" value="1"/>
</dbReference>
<dbReference type="NCBIfam" id="NF006820">
    <property type="entry name" value="PRK09344.1-2"/>
    <property type="match status" value="1"/>
</dbReference>
<dbReference type="NCBIfam" id="NF006821">
    <property type="entry name" value="PRK09344.1-3"/>
    <property type="match status" value="1"/>
</dbReference>
<dbReference type="PANTHER" id="PTHR30031:SF0">
    <property type="entry name" value="PHOSPHOENOLPYRUVATE CARBOXYKINASE (ATP)"/>
    <property type="match status" value="1"/>
</dbReference>
<dbReference type="PANTHER" id="PTHR30031">
    <property type="entry name" value="PHOSPHOENOLPYRUVATE CARBOXYKINASE ATP"/>
    <property type="match status" value="1"/>
</dbReference>
<dbReference type="Pfam" id="PF01293">
    <property type="entry name" value="PEPCK_ATP"/>
    <property type="match status" value="1"/>
</dbReference>
<dbReference type="PIRSF" id="PIRSF006294">
    <property type="entry name" value="PEP_crbxkin"/>
    <property type="match status" value="1"/>
</dbReference>
<dbReference type="SUPFAM" id="SSF68923">
    <property type="entry name" value="PEP carboxykinase N-terminal domain"/>
    <property type="match status" value="1"/>
</dbReference>
<dbReference type="SUPFAM" id="SSF53795">
    <property type="entry name" value="PEP carboxykinase-like"/>
    <property type="match status" value="1"/>
</dbReference>
<dbReference type="PROSITE" id="PS00532">
    <property type="entry name" value="PEPCK_ATP"/>
    <property type="match status" value="1"/>
</dbReference>
<sequence>MTDLNQLTQELGALGIHDVQEVVYNPSYELLFAEETKPGLEGYEKGTVTNQGAVAVNTGIFTGRSPKDKYIVLDDKTKDTVWWTSEKVKNDNKPMSQDTWNSLKGLVADQLSGKRLFVVDAFCGANKDTRLAVRVVTEVAWQAHFVTNMFIRPSAEELKGFKPDFVVMNGAKCTNPNWKEQGLNSENFVAFNITEGVQLIGGTWYGGEMKKGMFSMMNYFLPLRGIASMHCSANVGKDGDTAIFFGLSGTGKTTLSTDPKRQLIGDDEHGWDDEGVFNFEGGCYAKTINLSAENEPDIYGAIKRDALLENVVVLDNGDVDYADGSKTENTRVSYPIYHIQNIVKPVSKAGPATKVIFLSADAFGVLPPVSKLTPEQTKYYFLSGFTAKLAGTERGITEPTPTFSACFGAAFLSLHPTQYAEVLVKRMQESGAEAYLVNTGWNGTGKRISIKDTRGIIDAILDGSIDKAEMGSLPIFDFSIPKALPGVNPAILDPRDTYADKAQWEEKAQDLAGRFVKNFEKYTGTAEGQALVAAGPKA</sequence>
<protein>
    <recommendedName>
        <fullName evidence="1">Phosphoenolpyruvate carboxykinase (ATP)</fullName>
        <shortName evidence="1">PCK</shortName>
        <shortName evidence="1">PEP carboxykinase</shortName>
        <shortName evidence="1">PEPCK</shortName>
        <ecNumber evidence="1">4.1.1.49</ecNumber>
    </recommendedName>
</protein>
<organism>
    <name type="scientific">Mannheimia succiniciproducens (strain KCTC 0769BP / MBEL55E)</name>
    <dbReference type="NCBI Taxonomy" id="221988"/>
    <lineage>
        <taxon>Bacteria</taxon>
        <taxon>Pseudomonadati</taxon>
        <taxon>Pseudomonadota</taxon>
        <taxon>Gammaproteobacteria</taxon>
        <taxon>Pasteurellales</taxon>
        <taxon>Pasteurellaceae</taxon>
        <taxon>Basfia</taxon>
    </lineage>
</organism>
<accession>Q65Q60</accession>
<reference key="1">
    <citation type="journal article" date="2004" name="Nat. Biotechnol.">
        <title>The genome sequence of the capnophilic rumen bacterium Mannheimia succiniciproducens.</title>
        <authorList>
            <person name="Hong S.H."/>
            <person name="Kim J.S."/>
            <person name="Lee S.Y."/>
            <person name="In Y.H."/>
            <person name="Choi S.S."/>
            <person name="Rih J.-K."/>
            <person name="Kim C.H."/>
            <person name="Jeong H."/>
            <person name="Hur C.G."/>
            <person name="Kim J.J."/>
        </authorList>
    </citation>
    <scope>NUCLEOTIDE SEQUENCE [LARGE SCALE GENOMIC DNA]</scope>
    <source>
        <strain>KCTC 0769BP / MBEL55E</strain>
    </source>
</reference>
<gene>
    <name evidence="1" type="primary">pckA</name>
    <name type="ordered locus">MS2293</name>
</gene>
<name>PCKA_MANSM</name>
<feature type="chain" id="PRO_0000203827" description="Phosphoenolpyruvate carboxykinase (ATP)">
    <location>
        <begin position="1"/>
        <end position="538"/>
    </location>
</feature>
<feature type="binding site" evidence="1">
    <location>
        <position position="64"/>
    </location>
    <ligand>
        <name>substrate</name>
    </ligand>
</feature>
<feature type="binding site" evidence="1">
    <location>
        <position position="205"/>
    </location>
    <ligand>
        <name>substrate</name>
    </ligand>
</feature>
<feature type="binding site" evidence="1">
    <location>
        <position position="211"/>
    </location>
    <ligand>
        <name>ATP</name>
        <dbReference type="ChEBI" id="CHEBI:30616"/>
    </ligand>
</feature>
<feature type="binding site" evidence="1">
    <location>
        <position position="211"/>
    </location>
    <ligand>
        <name>Mn(2+)</name>
        <dbReference type="ChEBI" id="CHEBI:29035"/>
    </ligand>
</feature>
<feature type="binding site" evidence="1">
    <location>
        <position position="211"/>
    </location>
    <ligand>
        <name>substrate</name>
    </ligand>
</feature>
<feature type="binding site" evidence="1">
    <location>
        <position position="230"/>
    </location>
    <ligand>
        <name>ATP</name>
        <dbReference type="ChEBI" id="CHEBI:30616"/>
    </ligand>
</feature>
<feature type="binding site" evidence="1">
    <location>
        <position position="230"/>
    </location>
    <ligand>
        <name>Mn(2+)</name>
        <dbReference type="ChEBI" id="CHEBI:29035"/>
    </ligand>
</feature>
<feature type="binding site" evidence="1">
    <location>
        <begin position="246"/>
        <end position="254"/>
    </location>
    <ligand>
        <name>ATP</name>
        <dbReference type="ChEBI" id="CHEBI:30616"/>
    </ligand>
</feature>
<feature type="binding site" evidence="1">
    <location>
        <position position="267"/>
    </location>
    <ligand>
        <name>Mn(2+)</name>
        <dbReference type="ChEBI" id="CHEBI:29035"/>
    </ligand>
</feature>
<feature type="binding site" evidence="1">
    <location>
        <position position="295"/>
    </location>
    <ligand>
        <name>ATP</name>
        <dbReference type="ChEBI" id="CHEBI:30616"/>
    </ligand>
</feature>
<feature type="binding site" evidence="1">
    <location>
        <position position="331"/>
    </location>
    <ligand>
        <name>ATP</name>
        <dbReference type="ChEBI" id="CHEBI:30616"/>
    </ligand>
</feature>
<feature type="binding site" evidence="1">
    <location>
        <position position="331"/>
    </location>
    <ligand>
        <name>substrate</name>
    </ligand>
</feature>
<feature type="binding site" evidence="1">
    <location>
        <begin position="447"/>
        <end position="448"/>
    </location>
    <ligand>
        <name>ATP</name>
        <dbReference type="ChEBI" id="CHEBI:30616"/>
    </ligand>
</feature>
<feature type="binding site" evidence="1">
    <location>
        <position position="453"/>
    </location>
    <ligand>
        <name>ATP</name>
        <dbReference type="ChEBI" id="CHEBI:30616"/>
    </ligand>
</feature>
<comment type="function">
    <text evidence="1">Involved in the gluconeogenesis. Catalyzes the conversion of oxaloacetate (OAA) to phosphoenolpyruvate (PEP) through direct phosphoryl transfer between the nucleoside triphosphate and OAA.</text>
</comment>
<comment type="catalytic activity">
    <reaction evidence="1">
        <text>oxaloacetate + ATP = phosphoenolpyruvate + ADP + CO2</text>
        <dbReference type="Rhea" id="RHEA:18617"/>
        <dbReference type="ChEBI" id="CHEBI:16452"/>
        <dbReference type="ChEBI" id="CHEBI:16526"/>
        <dbReference type="ChEBI" id="CHEBI:30616"/>
        <dbReference type="ChEBI" id="CHEBI:58702"/>
        <dbReference type="ChEBI" id="CHEBI:456216"/>
        <dbReference type="EC" id="4.1.1.49"/>
    </reaction>
</comment>
<comment type="cofactor">
    <cofactor evidence="1">
        <name>Mn(2+)</name>
        <dbReference type="ChEBI" id="CHEBI:29035"/>
    </cofactor>
    <text evidence="1">Binds 1 Mn(2+) ion per subunit.</text>
</comment>
<comment type="pathway">
    <text evidence="1">Carbohydrate biosynthesis; gluconeogenesis.</text>
</comment>
<comment type="subunit">
    <text evidence="1">Monomer.</text>
</comment>
<comment type="subcellular location">
    <subcellularLocation>
        <location evidence="1">Cytoplasm</location>
    </subcellularLocation>
</comment>
<comment type="similarity">
    <text evidence="1">Belongs to the phosphoenolpyruvate carboxykinase (ATP) family.</text>
</comment>
<evidence type="ECO:0000255" key="1">
    <source>
        <dbReference type="HAMAP-Rule" id="MF_00453"/>
    </source>
</evidence>
<proteinExistence type="inferred from homology"/>
<keyword id="KW-0067">ATP-binding</keyword>
<keyword id="KW-0963">Cytoplasm</keyword>
<keyword id="KW-0210">Decarboxylase</keyword>
<keyword id="KW-0312">Gluconeogenesis</keyword>
<keyword id="KW-0456">Lyase</keyword>
<keyword id="KW-0464">Manganese</keyword>
<keyword id="KW-0479">Metal-binding</keyword>
<keyword id="KW-0547">Nucleotide-binding</keyword>